<reference key="1">
    <citation type="journal article" date="2006" name="DNA Res.">
        <title>Genome sequence of the cat pathogen, Chlamydophila felis.</title>
        <authorList>
            <person name="Azuma Y."/>
            <person name="Hirakawa H."/>
            <person name="Yamashita A."/>
            <person name="Cai Y."/>
            <person name="Rahman M.A."/>
            <person name="Suzuki H."/>
            <person name="Mitaku S."/>
            <person name="Toh H."/>
            <person name="Goto S."/>
            <person name="Murakami T."/>
            <person name="Sugi K."/>
            <person name="Hayashi H."/>
            <person name="Fukushi H."/>
            <person name="Hattori M."/>
            <person name="Kuhara S."/>
            <person name="Shirai M."/>
        </authorList>
    </citation>
    <scope>NUCLEOTIDE SEQUENCE [LARGE SCALE GENOMIC DNA]</scope>
    <source>
        <strain>Fe/C-56</strain>
    </source>
</reference>
<feature type="chain" id="PRO_0000239301" description="Serine/threonine-protein kinase PknD">
    <location>
        <begin position="1"/>
        <end position="933"/>
    </location>
</feature>
<feature type="domain" description="Protein kinase" evidence="1">
    <location>
        <begin position="4"/>
        <end position="291"/>
    </location>
</feature>
<feature type="active site" description="Proton acceptor" evidence="1">
    <location>
        <position position="138"/>
    </location>
</feature>
<feature type="binding site" evidence="1">
    <location>
        <begin position="10"/>
        <end position="18"/>
    </location>
    <ligand>
        <name>ATP</name>
        <dbReference type="ChEBI" id="CHEBI:30616"/>
    </ligand>
</feature>
<feature type="binding site" evidence="1">
    <location>
        <position position="33"/>
    </location>
    <ligand>
        <name>ATP</name>
        <dbReference type="ChEBI" id="CHEBI:30616"/>
    </ligand>
</feature>
<proteinExistence type="inferred from homology"/>
<keyword id="KW-0067">ATP-binding</keyword>
<keyword id="KW-0418">Kinase</keyword>
<keyword id="KW-0547">Nucleotide-binding</keyword>
<keyword id="KW-0597">Phosphoprotein</keyword>
<keyword id="KW-0723">Serine/threonine-protein kinase</keyword>
<keyword id="KW-0808">Transferase</keyword>
<accession>Q255D2</accession>
<name>PKND_CHLFF</name>
<sequence length="933" mass="106799">MQRYDIIRMIGKGGMGEVYLAYDPVCSRKVALKRIREDLSDNELLKKRFLREAKIAADLVHPGVVPVFTICSDSDPVYYTMPYIEGYTLKSLLKSVWQCDSLPKDLAEQTSVGTFLSIFHKICSTVEYVHSRGILHRDLKPDNILLGLFSEVVILDWGAALSKEMQEEVLLDIDIPVTGSMFSNMTIPGKIVGTPDYMAPERLRGTPASESTDIYALGVILYQMLTLSFPYRNKKGKKISFRHQISSPEEIAPHREIPPFLSQVAMKALAADPKVRYASVKELKDDIEQHLQGSPEWTPKTILHTQKAECWKLRESILLSKYFPMLGVSPALWYSLAISKIESFSEVRLEYTLLRKGLEDGFGILLPPSEGVDHGDFYHGYGFWLHIKNSVFSVSLVKNGLEIRKTSRPIKENKEKFFIALEKQNHRLSLIIDHVVWMIHMDYLPGRGGRIGVIIQDVTDVCGNIVVLESSGSLQVSCLAVPDAFLNEKLYDRAITFYRRIAESFPGRKEGYEAQFRIGIALLEKASESGDSEGFTQALGKFEILHNSVAAPLEYLGKALVYQRLGEYNEEVKSLLLALKRYCQCPEISRIRDHIVYRLHETLYSNHRLSLVFMLLALHIAPESINATEEEYFVKNLHGKIQDTLFCNLDLSPIDFRSSKMELLLSYWSGFTPFLPGLFQKYWDLKDYRALADVFYVAADLGNREFLEMYSDLVRENICSTTCTEDIVEFLPHQLEHFFSGVRAISLHEPLEKVFAHIEILDPVLILYLFDLFAKDALIHHRGELILSAITLIEKYVSSQQYYEHLLPCEVLAYLWMKDEKKVYNLLCNNYEESLWLDDRSPAFVLYGCWLALVEDSSLSYLHLSGCREDALYPRALIGGFCSPLGICENQLSYQERRKLLLQKFIFFHCLGMNEERDNCTVAYDLLSIERSL</sequence>
<evidence type="ECO:0000255" key="1">
    <source>
        <dbReference type="HAMAP-Rule" id="MF_01957"/>
    </source>
</evidence>
<evidence type="ECO:0000305" key="2"/>
<dbReference type="EC" id="2.7.11.1" evidence="1"/>
<dbReference type="EMBL" id="AP006861">
    <property type="protein sequence ID" value="BAE81106.1"/>
    <property type="status" value="ALT_INIT"/>
    <property type="molecule type" value="Genomic_DNA"/>
</dbReference>
<dbReference type="RefSeq" id="WP_011457886.1">
    <property type="nucleotide sequence ID" value="NC_007899.1"/>
</dbReference>
<dbReference type="SMR" id="Q255D2"/>
<dbReference type="STRING" id="264202.CF0334"/>
<dbReference type="KEGG" id="cfe:CF0334"/>
<dbReference type="eggNOG" id="COG0515">
    <property type="taxonomic scope" value="Bacteria"/>
</dbReference>
<dbReference type="HOGENOM" id="CLU_303227_0_0_0"/>
<dbReference type="OrthoDB" id="9788659at2"/>
<dbReference type="Proteomes" id="UP000001260">
    <property type="component" value="Chromosome"/>
</dbReference>
<dbReference type="GO" id="GO:0005524">
    <property type="term" value="F:ATP binding"/>
    <property type="evidence" value="ECO:0007669"/>
    <property type="project" value="UniProtKB-KW"/>
</dbReference>
<dbReference type="GO" id="GO:0106310">
    <property type="term" value="F:protein serine kinase activity"/>
    <property type="evidence" value="ECO:0007669"/>
    <property type="project" value="RHEA"/>
</dbReference>
<dbReference type="GO" id="GO:0004674">
    <property type="term" value="F:protein serine/threonine kinase activity"/>
    <property type="evidence" value="ECO:0007669"/>
    <property type="project" value="UniProtKB-UniRule"/>
</dbReference>
<dbReference type="CDD" id="cd14014">
    <property type="entry name" value="STKc_PknB_like"/>
    <property type="match status" value="1"/>
</dbReference>
<dbReference type="Gene3D" id="3.30.200.20">
    <property type="entry name" value="Phosphorylase Kinase, domain 1"/>
    <property type="match status" value="1"/>
</dbReference>
<dbReference type="Gene3D" id="1.25.40.10">
    <property type="entry name" value="Tetratricopeptide repeat domain"/>
    <property type="match status" value="1"/>
</dbReference>
<dbReference type="Gene3D" id="1.10.510.10">
    <property type="entry name" value="Transferase(Phosphotransferase) domain 1"/>
    <property type="match status" value="1"/>
</dbReference>
<dbReference type="HAMAP" id="MF_01957">
    <property type="entry name" value="PknD_kinase"/>
    <property type="match status" value="1"/>
</dbReference>
<dbReference type="InterPro" id="IPR011009">
    <property type="entry name" value="Kinase-like_dom_sf"/>
</dbReference>
<dbReference type="InterPro" id="IPR000719">
    <property type="entry name" value="Prot_kinase_dom"/>
</dbReference>
<dbReference type="InterPro" id="IPR017441">
    <property type="entry name" value="Protein_kinase_ATP_BS"/>
</dbReference>
<dbReference type="InterPro" id="IPR008271">
    <property type="entry name" value="Ser/Thr_kinase_AS"/>
</dbReference>
<dbReference type="InterPro" id="IPR023507">
    <property type="entry name" value="Ser/Thr_kinase_PknD"/>
</dbReference>
<dbReference type="InterPro" id="IPR011990">
    <property type="entry name" value="TPR-like_helical_dom_sf"/>
</dbReference>
<dbReference type="NCBIfam" id="NF009651">
    <property type="entry name" value="PRK13184.1"/>
    <property type="match status" value="1"/>
</dbReference>
<dbReference type="PANTHER" id="PTHR43289">
    <property type="entry name" value="MITOGEN-ACTIVATED PROTEIN KINASE KINASE KINASE 20-RELATED"/>
    <property type="match status" value="1"/>
</dbReference>
<dbReference type="PANTHER" id="PTHR43289:SF34">
    <property type="entry name" value="SERINE_THREONINE-PROTEIN KINASE YBDM-RELATED"/>
    <property type="match status" value="1"/>
</dbReference>
<dbReference type="Pfam" id="PF00069">
    <property type="entry name" value="Pkinase"/>
    <property type="match status" value="1"/>
</dbReference>
<dbReference type="SMART" id="SM00220">
    <property type="entry name" value="S_TKc"/>
    <property type="match status" value="1"/>
</dbReference>
<dbReference type="SUPFAM" id="SSF56112">
    <property type="entry name" value="Protein kinase-like (PK-like)"/>
    <property type="match status" value="1"/>
</dbReference>
<dbReference type="PROSITE" id="PS00107">
    <property type="entry name" value="PROTEIN_KINASE_ATP"/>
    <property type="match status" value="1"/>
</dbReference>
<dbReference type="PROSITE" id="PS50011">
    <property type="entry name" value="PROTEIN_KINASE_DOM"/>
    <property type="match status" value="1"/>
</dbReference>
<dbReference type="PROSITE" id="PS00108">
    <property type="entry name" value="PROTEIN_KINASE_ST"/>
    <property type="match status" value="1"/>
</dbReference>
<protein>
    <recommendedName>
        <fullName evidence="1">Serine/threonine-protein kinase PknD</fullName>
        <ecNumber evidence="1">2.7.11.1</ecNumber>
    </recommendedName>
</protein>
<comment type="function">
    <text evidence="1">Together with the serine/threonine kinase Pkn1, may play a role in the specific interactions with host proteins during intracellular growth.</text>
</comment>
<comment type="catalytic activity">
    <reaction evidence="1">
        <text>L-seryl-[protein] + ATP = O-phospho-L-seryl-[protein] + ADP + H(+)</text>
        <dbReference type="Rhea" id="RHEA:17989"/>
        <dbReference type="Rhea" id="RHEA-COMP:9863"/>
        <dbReference type="Rhea" id="RHEA-COMP:11604"/>
        <dbReference type="ChEBI" id="CHEBI:15378"/>
        <dbReference type="ChEBI" id="CHEBI:29999"/>
        <dbReference type="ChEBI" id="CHEBI:30616"/>
        <dbReference type="ChEBI" id="CHEBI:83421"/>
        <dbReference type="ChEBI" id="CHEBI:456216"/>
        <dbReference type="EC" id="2.7.11.1"/>
    </reaction>
</comment>
<comment type="catalytic activity">
    <reaction evidence="1">
        <text>L-threonyl-[protein] + ATP = O-phospho-L-threonyl-[protein] + ADP + H(+)</text>
        <dbReference type="Rhea" id="RHEA:46608"/>
        <dbReference type="Rhea" id="RHEA-COMP:11060"/>
        <dbReference type="Rhea" id="RHEA-COMP:11605"/>
        <dbReference type="ChEBI" id="CHEBI:15378"/>
        <dbReference type="ChEBI" id="CHEBI:30013"/>
        <dbReference type="ChEBI" id="CHEBI:30616"/>
        <dbReference type="ChEBI" id="CHEBI:61977"/>
        <dbReference type="ChEBI" id="CHEBI:456216"/>
        <dbReference type="EC" id="2.7.11.1"/>
    </reaction>
</comment>
<comment type="PTM">
    <text evidence="1">Autophosphorylated on serine and threonine residues.</text>
</comment>
<comment type="similarity">
    <text evidence="1">Belongs to the protein kinase superfamily. Ser/Thr protein kinase family.</text>
</comment>
<comment type="sequence caution" evidence="2">
    <conflict type="erroneous initiation">
        <sequence resource="EMBL-CDS" id="BAE81106"/>
    </conflict>
</comment>
<gene>
    <name evidence="1" type="primary">pknD</name>
    <name type="ordered locus">CF0334</name>
</gene>
<organism>
    <name type="scientific">Chlamydia felis (strain Fe/C-56)</name>
    <name type="common">Chlamydophila felis</name>
    <dbReference type="NCBI Taxonomy" id="264202"/>
    <lineage>
        <taxon>Bacteria</taxon>
        <taxon>Pseudomonadati</taxon>
        <taxon>Chlamydiota</taxon>
        <taxon>Chlamydiia</taxon>
        <taxon>Chlamydiales</taxon>
        <taxon>Chlamydiaceae</taxon>
        <taxon>Chlamydia/Chlamydophila group</taxon>
        <taxon>Chlamydia</taxon>
    </lineage>
</organism>